<organism>
    <name type="scientific">Kluyveromyces lactis (strain ATCC 8585 / CBS 2359 / DSM 70799 / NBRC 1267 / NRRL Y-1140 / WM37)</name>
    <name type="common">Yeast</name>
    <name type="synonym">Candida sphaerica</name>
    <dbReference type="NCBI Taxonomy" id="284590"/>
    <lineage>
        <taxon>Eukaryota</taxon>
        <taxon>Fungi</taxon>
        <taxon>Dikarya</taxon>
        <taxon>Ascomycota</taxon>
        <taxon>Saccharomycotina</taxon>
        <taxon>Saccharomycetes</taxon>
        <taxon>Saccharomycetales</taxon>
        <taxon>Saccharomycetaceae</taxon>
        <taxon>Kluyveromyces</taxon>
    </lineage>
</organism>
<comment type="subcellular location">
    <subcellularLocation>
        <location evidence="1">Cytoplasm</location>
    </subcellularLocation>
    <subcellularLocation>
        <location evidence="1">Nucleus</location>
    </subcellularLocation>
</comment>
<gene>
    <name type="primary">JJJ2</name>
    <name type="ordered locus">KLLA0B07271g</name>
</gene>
<proteinExistence type="inferred from homology"/>
<dbReference type="EMBL" id="CR382122">
    <property type="protein sequence ID" value="CAH02247.1"/>
    <property type="molecule type" value="Genomic_DNA"/>
</dbReference>
<dbReference type="RefSeq" id="XP_451854.1">
    <property type="nucleotide sequence ID" value="XM_451854.1"/>
</dbReference>
<dbReference type="SMR" id="Q6CW35"/>
<dbReference type="FunCoup" id="Q6CW35">
    <property type="interactions" value="55"/>
</dbReference>
<dbReference type="STRING" id="284590.Q6CW35"/>
<dbReference type="PaxDb" id="284590-Q6CW35"/>
<dbReference type="KEGG" id="kla:KLLA0_B07271g"/>
<dbReference type="eggNOG" id="KOG0714">
    <property type="taxonomic scope" value="Eukaryota"/>
</dbReference>
<dbReference type="HOGENOM" id="CLU_490950_0_0_1"/>
<dbReference type="InParanoid" id="Q6CW35"/>
<dbReference type="OMA" id="ARSKFEC"/>
<dbReference type="Proteomes" id="UP000000598">
    <property type="component" value="Chromosome B"/>
</dbReference>
<dbReference type="GO" id="GO:0005737">
    <property type="term" value="C:cytoplasm"/>
    <property type="evidence" value="ECO:0007669"/>
    <property type="project" value="UniProtKB-SubCell"/>
</dbReference>
<dbReference type="GO" id="GO:0005634">
    <property type="term" value="C:nucleus"/>
    <property type="evidence" value="ECO:0007669"/>
    <property type="project" value="UniProtKB-SubCell"/>
</dbReference>
<dbReference type="CDD" id="cd06257">
    <property type="entry name" value="DnaJ"/>
    <property type="match status" value="1"/>
</dbReference>
<dbReference type="Gene3D" id="1.10.287.110">
    <property type="entry name" value="DnaJ domain"/>
    <property type="match status" value="1"/>
</dbReference>
<dbReference type="InterPro" id="IPR052276">
    <property type="entry name" value="Diphthamide-biosynth_chaperone"/>
</dbReference>
<dbReference type="InterPro" id="IPR001623">
    <property type="entry name" value="DnaJ_domain"/>
</dbReference>
<dbReference type="InterPro" id="IPR036869">
    <property type="entry name" value="J_dom_sf"/>
</dbReference>
<dbReference type="PANTHER" id="PTHR44240">
    <property type="entry name" value="DNAJ DOMAIN (PROKARYOTIC HEAT SHOCK PROTEIN)-RELATED"/>
    <property type="match status" value="1"/>
</dbReference>
<dbReference type="PANTHER" id="PTHR44240:SF10">
    <property type="entry name" value="J DOMAIN-CONTAINING PROTEIN"/>
    <property type="match status" value="1"/>
</dbReference>
<dbReference type="Pfam" id="PF00226">
    <property type="entry name" value="DnaJ"/>
    <property type="match status" value="1"/>
</dbReference>
<dbReference type="PRINTS" id="PR00625">
    <property type="entry name" value="JDOMAIN"/>
</dbReference>
<dbReference type="SMART" id="SM00271">
    <property type="entry name" value="DnaJ"/>
    <property type="match status" value="1"/>
</dbReference>
<dbReference type="SUPFAM" id="SSF46565">
    <property type="entry name" value="Chaperone J-domain"/>
    <property type="match status" value="1"/>
</dbReference>
<dbReference type="PROSITE" id="PS50076">
    <property type="entry name" value="DNAJ_2"/>
    <property type="match status" value="1"/>
</dbReference>
<feature type="chain" id="PRO_0000333577" description="J protein JJJ2">
    <location>
        <begin position="1"/>
        <end position="653"/>
    </location>
</feature>
<feature type="domain" description="J" evidence="2">
    <location>
        <begin position="14"/>
        <end position="78"/>
    </location>
</feature>
<feature type="region of interest" description="Disordered" evidence="3">
    <location>
        <begin position="85"/>
        <end position="308"/>
    </location>
</feature>
<feature type="region of interest" description="Disordered" evidence="3">
    <location>
        <begin position="490"/>
        <end position="512"/>
    </location>
</feature>
<feature type="compositionally biased region" description="Polar residues" evidence="3">
    <location>
        <begin position="161"/>
        <end position="171"/>
    </location>
</feature>
<feature type="compositionally biased region" description="Polar residues" evidence="3">
    <location>
        <begin position="187"/>
        <end position="200"/>
    </location>
</feature>
<feature type="compositionally biased region" description="Low complexity" evidence="3">
    <location>
        <begin position="213"/>
        <end position="241"/>
    </location>
</feature>
<feature type="compositionally biased region" description="Polar residues" evidence="3">
    <location>
        <begin position="298"/>
        <end position="308"/>
    </location>
</feature>
<reference key="1">
    <citation type="journal article" date="2004" name="Nature">
        <title>Genome evolution in yeasts.</title>
        <authorList>
            <person name="Dujon B."/>
            <person name="Sherman D."/>
            <person name="Fischer G."/>
            <person name="Durrens P."/>
            <person name="Casaregola S."/>
            <person name="Lafontaine I."/>
            <person name="de Montigny J."/>
            <person name="Marck C."/>
            <person name="Neuveglise C."/>
            <person name="Talla E."/>
            <person name="Goffard N."/>
            <person name="Frangeul L."/>
            <person name="Aigle M."/>
            <person name="Anthouard V."/>
            <person name="Babour A."/>
            <person name="Barbe V."/>
            <person name="Barnay S."/>
            <person name="Blanchin S."/>
            <person name="Beckerich J.-M."/>
            <person name="Beyne E."/>
            <person name="Bleykasten C."/>
            <person name="Boisrame A."/>
            <person name="Boyer J."/>
            <person name="Cattolico L."/>
            <person name="Confanioleri F."/>
            <person name="de Daruvar A."/>
            <person name="Despons L."/>
            <person name="Fabre E."/>
            <person name="Fairhead C."/>
            <person name="Ferry-Dumazet H."/>
            <person name="Groppi A."/>
            <person name="Hantraye F."/>
            <person name="Hennequin C."/>
            <person name="Jauniaux N."/>
            <person name="Joyet P."/>
            <person name="Kachouri R."/>
            <person name="Kerrest A."/>
            <person name="Koszul R."/>
            <person name="Lemaire M."/>
            <person name="Lesur I."/>
            <person name="Ma L."/>
            <person name="Muller H."/>
            <person name="Nicaud J.-M."/>
            <person name="Nikolski M."/>
            <person name="Oztas S."/>
            <person name="Ozier-Kalogeropoulos O."/>
            <person name="Pellenz S."/>
            <person name="Potier S."/>
            <person name="Richard G.-F."/>
            <person name="Straub M.-L."/>
            <person name="Suleau A."/>
            <person name="Swennen D."/>
            <person name="Tekaia F."/>
            <person name="Wesolowski-Louvel M."/>
            <person name="Westhof E."/>
            <person name="Wirth B."/>
            <person name="Zeniou-Meyer M."/>
            <person name="Zivanovic Y."/>
            <person name="Bolotin-Fukuhara M."/>
            <person name="Thierry A."/>
            <person name="Bouchier C."/>
            <person name="Caudron B."/>
            <person name="Scarpelli C."/>
            <person name="Gaillardin C."/>
            <person name="Weissenbach J."/>
            <person name="Wincker P."/>
            <person name="Souciet J.-L."/>
        </authorList>
    </citation>
    <scope>NUCLEOTIDE SEQUENCE [LARGE SCALE GENOMIC DNA]</scope>
    <source>
        <strain>ATCC 8585 / CBS 2359 / DSM 70799 / NBRC 1267 / NRRL Y-1140 / WM37</strain>
    </source>
</reference>
<keyword id="KW-0143">Chaperone</keyword>
<keyword id="KW-0963">Cytoplasm</keyword>
<keyword id="KW-0539">Nucleus</keyword>
<keyword id="KW-1185">Reference proteome</keyword>
<evidence type="ECO:0000250" key="1"/>
<evidence type="ECO:0000255" key="2">
    <source>
        <dbReference type="PROSITE-ProRule" id="PRU00286"/>
    </source>
</evidence>
<evidence type="ECO:0000256" key="3">
    <source>
        <dbReference type="SAM" id="MobiDB-lite"/>
    </source>
</evidence>
<protein>
    <recommendedName>
        <fullName>J protein JJJ2</fullName>
    </recommendedName>
</protein>
<accession>Q6CW35</accession>
<name>JJJ2_KLULA</name>
<sequence>MSGSDKTYQLDETTLYSVLNLKYGATEVQIRKAYMKLARELHPDKSKSEEAGELFKKVAHAHFILTDKKEKMKYDSKLLAKGLYDYSPRIPNDKSRQNGMFKDTAKNSKTFTNNNNKDDASADTSKSKPRKSRPYEEQPYGFGVDTGRGSGKNIPLFKTFNAKSYQNSKKSVTPPRPKQPSEKNKRATSFSNENRNSSSVPLAKNQAKKTANSGSAVGSESRISSSGSESSSNVNSATGSSEEPDVHTQHKMARKDSYLSGFQSKARSPESPFQDPAQRHFVRTKYVSSRYDKRSLSPVKTTPNSSTETLNNVKNIFNSMSDRLRHTLFGNSNGDAEDEDQHNTQHDTERLFKRAKLPGRKILTDEEIDEIVKQQNEAESNDPDRQDYGNSFNLNVDNLSVNTQDFNHISEPSPEKEETKANKAPFLEEVYEIKSDNEHLEEKAAVSPDDGIDTLGLNELGETLPNNKEPFDMRNVGDSLDNYQVKRMKVSPKPRSVPSKTTPGSSHAEENLQEPVNIPLPRIYKLDPIPIEKFNVDLSISNIKLPEMPNLLCNVLDKAQVLECQQKTAEFTKQTNETKRKLLHILSQRCSADEELHDKLYRVENVNRMVEAKLYDLELMTKLSELLNRQRMVAENYAIMINTMYASGLLEKN</sequence>